<gene>
    <name type="primary">tcpF</name>
    <name type="ordered locus">VC0395_A0362</name>
    <name type="ordered locus">VC395_0853</name>
</gene>
<accession>A5F383</accession>
<accession>C3LYK2</accession>
<accession>P29488</accession>
<accession>Q9KTQ9</accession>
<feature type="signal peptide" evidence="2">
    <location>
        <begin position="1"/>
        <end position="20"/>
    </location>
</feature>
<feature type="chain" id="PRO_0000324785" description="Toxin coregulated pilus biosynthesis protein F">
    <location>
        <begin position="21"/>
        <end position="338"/>
    </location>
</feature>
<reference key="1">
    <citation type="journal article" date="2001" name="Infect. Immun.">
        <title>Comparison of Vibrio cholerae pathogenicity islands in sixth and seventh pandemic strains.</title>
        <authorList>
            <person name="Karaolis D.K.R."/>
            <person name="Lan R."/>
            <person name="Kaper J.B."/>
            <person name="Reeves P.R."/>
        </authorList>
    </citation>
    <scope>NUCLEOTIDE SEQUENCE [GENOMIC DNA]</scope>
</reference>
<reference key="2">
    <citation type="submission" date="2007-03" db="EMBL/GenBank/DDBJ databases">
        <authorList>
            <person name="Heidelberg J."/>
        </authorList>
    </citation>
    <scope>NUCLEOTIDE SEQUENCE [LARGE SCALE GENOMIC DNA]</scope>
    <source>
        <strain>ATCC 39541 / Classical Ogawa 395 / O395</strain>
    </source>
</reference>
<reference key="3">
    <citation type="journal article" date="2008" name="PLoS ONE">
        <title>A recalibrated molecular clock and independent origins for the cholera pandemic clones.</title>
        <authorList>
            <person name="Feng L."/>
            <person name="Reeves P.R."/>
            <person name="Lan R."/>
            <person name="Ren Y."/>
            <person name="Gao C."/>
            <person name="Zhou Z."/>
            <person name="Ren Y."/>
            <person name="Cheng J."/>
            <person name="Wang W."/>
            <person name="Wang J."/>
            <person name="Qian W."/>
            <person name="Li D."/>
            <person name="Wang L."/>
        </authorList>
    </citation>
    <scope>NUCLEOTIDE SEQUENCE [LARGE SCALE GENOMIC DNA]</scope>
    <source>
        <strain>ATCC 39541 / Classical Ogawa 395 / O395</strain>
    </source>
</reference>
<name>TCPF_VIBC3</name>
<organism>
    <name type="scientific">Vibrio cholerae serotype O1 (strain ATCC 39541 / Classical Ogawa 395 / O395)</name>
    <dbReference type="NCBI Taxonomy" id="345073"/>
    <lineage>
        <taxon>Bacteria</taxon>
        <taxon>Pseudomonadati</taxon>
        <taxon>Pseudomonadota</taxon>
        <taxon>Gammaproteobacteria</taxon>
        <taxon>Vibrionales</taxon>
        <taxon>Vibrionaceae</taxon>
        <taxon>Vibrio</taxon>
    </lineage>
</organism>
<comment type="function">
    <text evidence="1">Involved in TCP pilus biogenesis. May be a channel protein (By similarity).</text>
</comment>
<comment type="subcellular location">
    <subcellularLocation>
        <location evidence="3">Cell outer membrane</location>
        <topology evidence="3">Peripheral membrane protein</topology>
    </subcellularLocation>
</comment>
<evidence type="ECO:0000250" key="1"/>
<evidence type="ECO:0000255" key="2"/>
<evidence type="ECO:0000305" key="3"/>
<keyword id="KW-0002">3D-structure</keyword>
<keyword id="KW-0998">Cell outer membrane</keyword>
<keyword id="KW-0472">Membrane</keyword>
<keyword id="KW-0732">Signal</keyword>
<dbReference type="EMBL" id="AF325733">
    <property type="protein sequence ID" value="AAK20764.1"/>
    <property type="molecule type" value="Genomic_DNA"/>
</dbReference>
<dbReference type="EMBL" id="CP000627">
    <property type="protein sequence ID" value="ABQ22146.1"/>
    <property type="molecule type" value="Genomic_DNA"/>
</dbReference>
<dbReference type="EMBL" id="CP001235">
    <property type="protein sequence ID" value="ACP08868.1"/>
    <property type="molecule type" value="Genomic_DNA"/>
</dbReference>
<dbReference type="RefSeq" id="WP_001269569.1">
    <property type="nucleotide sequence ID" value="NZ_JAACZH010000023.1"/>
</dbReference>
<dbReference type="PDB" id="7W65">
    <property type="method" value="X-ray"/>
    <property type="resolution" value="4.05 A"/>
    <property type="chains" value="D/E/F=21-338"/>
</dbReference>
<dbReference type="PDBsum" id="7W65"/>
<dbReference type="SMR" id="A5F383"/>
<dbReference type="KEGG" id="vco:VC0395_A0362"/>
<dbReference type="KEGG" id="vcr:VC395_0853"/>
<dbReference type="PATRIC" id="fig|345073.21.peg.825"/>
<dbReference type="HOGENOM" id="CLU_839222_0_0_6"/>
<dbReference type="OrthoDB" id="9866655at2"/>
<dbReference type="Proteomes" id="UP000000249">
    <property type="component" value="Chromosome 2"/>
</dbReference>
<dbReference type="GO" id="GO:0009279">
    <property type="term" value="C:cell outer membrane"/>
    <property type="evidence" value="ECO:0007669"/>
    <property type="project" value="UniProtKB-SubCell"/>
</dbReference>
<dbReference type="Gene3D" id="2.60.40.3240">
    <property type="entry name" value="Vibrio cholerae toxin co-regulated pilus biosynthesis protein F, C-terminal domain"/>
    <property type="match status" value="1"/>
</dbReference>
<dbReference type="InterPro" id="IPR009405">
    <property type="entry name" value="TcpF"/>
</dbReference>
<dbReference type="InterPro" id="IPR043125">
    <property type="entry name" value="TcpF_C"/>
</dbReference>
<dbReference type="Pfam" id="PF06340">
    <property type="entry name" value="TcpF"/>
    <property type="match status" value="1"/>
</dbReference>
<dbReference type="PIRSF" id="PIRSF020763">
    <property type="entry name" value="TcpF"/>
    <property type="match status" value="1"/>
</dbReference>
<protein>
    <recommendedName>
        <fullName>Toxin coregulated pilus biosynthesis protein F</fullName>
    </recommendedName>
    <alternativeName>
        <fullName>TCP pilus biosynthesis protein TcpF</fullName>
    </alternativeName>
</protein>
<sequence length="338" mass="38211">MRYKKTLMLSIMITSFNSFAFNDNYSSTSTVYATSNEATDSRGSEHLRYPYLECIKIGMSRDYLENCVKVSFPTSQDMFYDAYPSTESDGAKTRTKEDFSARLLAGDYDSLQKLYIDFYLAQTTFDWEIPTRDQIETLVNYANEGKLSTALNQEYITGRFLTKENGRYDIVNVGGVPDNTPVKLPAIVSKRGLMGTTSVVNAIPNEIYPHIKVYEGTLSRLKPGGAMIAVLEYDVNELSKHGYTNLWDVQFKVLVGVPHAETGVIYDPVYEETVKPYQPSNNLTGKKLYNVSTNDMHNGYKWSNTMFSNSNYKTQILLTKGDGSGVKLYSKAYSENFK</sequence>
<proteinExistence type="evidence at protein level"/>